<proteinExistence type="inferred from homology"/>
<evidence type="ECO:0000255" key="1">
    <source>
        <dbReference type="HAMAP-Rule" id="MF_00022"/>
    </source>
</evidence>
<keyword id="KW-0030">Aminoacyl-tRNA synthetase</keyword>
<keyword id="KW-0067">ATP-binding</keyword>
<keyword id="KW-0963">Cytoplasm</keyword>
<keyword id="KW-0436">Ligase</keyword>
<keyword id="KW-0547">Nucleotide-binding</keyword>
<keyword id="KW-0648">Protein biosynthesis</keyword>
<comment type="function">
    <text evidence="1">Catalyzes the attachment of glutamate to tRNA(Glu) in a two-step reaction: glutamate is first activated by ATP to form Glu-AMP and then transferred to the acceptor end of tRNA(Glu).</text>
</comment>
<comment type="catalytic activity">
    <reaction evidence="1">
        <text>tRNA(Glu) + L-glutamate + ATP = L-glutamyl-tRNA(Glu) + AMP + diphosphate</text>
        <dbReference type="Rhea" id="RHEA:23540"/>
        <dbReference type="Rhea" id="RHEA-COMP:9663"/>
        <dbReference type="Rhea" id="RHEA-COMP:9680"/>
        <dbReference type="ChEBI" id="CHEBI:29985"/>
        <dbReference type="ChEBI" id="CHEBI:30616"/>
        <dbReference type="ChEBI" id="CHEBI:33019"/>
        <dbReference type="ChEBI" id="CHEBI:78442"/>
        <dbReference type="ChEBI" id="CHEBI:78520"/>
        <dbReference type="ChEBI" id="CHEBI:456215"/>
        <dbReference type="EC" id="6.1.1.17"/>
    </reaction>
</comment>
<comment type="subunit">
    <text evidence="1">Monomer.</text>
</comment>
<comment type="subcellular location">
    <subcellularLocation>
        <location evidence="1">Cytoplasm</location>
    </subcellularLocation>
</comment>
<comment type="similarity">
    <text evidence="1">Belongs to the class-I aminoacyl-tRNA synthetase family. Glutamate--tRNA ligase type 1 subfamily.</text>
</comment>
<organism>
    <name type="scientific">Aliivibrio salmonicida (strain LFI1238)</name>
    <name type="common">Vibrio salmonicida (strain LFI1238)</name>
    <dbReference type="NCBI Taxonomy" id="316275"/>
    <lineage>
        <taxon>Bacteria</taxon>
        <taxon>Pseudomonadati</taxon>
        <taxon>Pseudomonadota</taxon>
        <taxon>Gammaproteobacteria</taxon>
        <taxon>Vibrionales</taxon>
        <taxon>Vibrionaceae</taxon>
        <taxon>Aliivibrio</taxon>
    </lineage>
</organism>
<accession>B6EJQ3</accession>
<reference key="1">
    <citation type="journal article" date="2008" name="BMC Genomics">
        <title>The genome sequence of the fish pathogen Aliivibrio salmonicida strain LFI1238 shows extensive evidence of gene decay.</title>
        <authorList>
            <person name="Hjerde E."/>
            <person name="Lorentzen M.S."/>
            <person name="Holden M.T."/>
            <person name="Seeger K."/>
            <person name="Paulsen S."/>
            <person name="Bason N."/>
            <person name="Churcher C."/>
            <person name="Harris D."/>
            <person name="Norbertczak H."/>
            <person name="Quail M.A."/>
            <person name="Sanders S."/>
            <person name="Thurston S."/>
            <person name="Parkhill J."/>
            <person name="Willassen N.P."/>
            <person name="Thomson N.R."/>
        </authorList>
    </citation>
    <scope>NUCLEOTIDE SEQUENCE [LARGE SCALE GENOMIC DNA]</scope>
    <source>
        <strain>LFI1238</strain>
    </source>
</reference>
<name>SYE_ALISL</name>
<protein>
    <recommendedName>
        <fullName evidence="1">Glutamate--tRNA ligase</fullName>
        <ecNumber evidence="1">6.1.1.17</ecNumber>
    </recommendedName>
    <alternativeName>
        <fullName evidence="1">Glutamyl-tRNA synthetase</fullName>
        <shortName evidence="1">GluRS</shortName>
    </alternativeName>
</protein>
<sequence>MTVKTRFAPSPTGYLHVGGARTALYSWLFAKNKGGEFVLRIEDTDLERNSQEAVDAILEGMKWMGMEWDEGPYYQSKRFDRYNEVVDLLLSEDKAYKCYASKELLDEIRTEQEENKEMARYDANHPKIVAANAAAKEGDASVIRFRNPKEGSVVFDDQIRGRIEISNSQLDDLIIRRTDGAPTYNFVVVVDDWDMGITQVIRGEDHINNTPRQINIYEALGAPVPMFAHCAMILGDDGAKLSKRHGAVSVMQYRDEGYLPNALNNYLVRLGWSHGDQEIFSQEEMINLFSLDAVSKSASAFNTDKLRWLNNHYIKTSEPEYVANYLQWHLDQKEISLDNGPAITDVITLVSERCNTLIELADQSRYFYEDFEAFDAGAAKKHLRGVAKGPLELALAKIEALQEWTTENLHNVIEEVCAELEIGMGKIGMPLRVAVTGGGQSPSVDAVMQLIGKERVVTRIKMALAFIAEREANA</sequence>
<feature type="chain" id="PRO_1000090051" description="Glutamate--tRNA ligase">
    <location>
        <begin position="1"/>
        <end position="474"/>
    </location>
</feature>
<feature type="short sequence motif" description="'HIGH' region" evidence="1">
    <location>
        <begin position="9"/>
        <end position="19"/>
    </location>
</feature>
<feature type="short sequence motif" description="'KMSKS' region" evidence="1">
    <location>
        <begin position="240"/>
        <end position="244"/>
    </location>
</feature>
<feature type="binding site" evidence="1">
    <location>
        <position position="243"/>
    </location>
    <ligand>
        <name>ATP</name>
        <dbReference type="ChEBI" id="CHEBI:30616"/>
    </ligand>
</feature>
<gene>
    <name evidence="1" type="primary">gltX</name>
    <name type="ordered locus">VSAL_I2350</name>
</gene>
<dbReference type="EC" id="6.1.1.17" evidence="1"/>
<dbReference type="EMBL" id="FM178379">
    <property type="protein sequence ID" value="CAQ80034.1"/>
    <property type="molecule type" value="Genomic_DNA"/>
</dbReference>
<dbReference type="RefSeq" id="WP_012550846.1">
    <property type="nucleotide sequence ID" value="NC_011312.1"/>
</dbReference>
<dbReference type="SMR" id="B6EJQ3"/>
<dbReference type="KEGG" id="vsa:VSAL_I2350"/>
<dbReference type="eggNOG" id="COG0008">
    <property type="taxonomic scope" value="Bacteria"/>
</dbReference>
<dbReference type="HOGENOM" id="CLU_015768_6_0_6"/>
<dbReference type="Proteomes" id="UP000001730">
    <property type="component" value="Chromosome 1"/>
</dbReference>
<dbReference type="GO" id="GO:0005829">
    <property type="term" value="C:cytosol"/>
    <property type="evidence" value="ECO:0007669"/>
    <property type="project" value="TreeGrafter"/>
</dbReference>
<dbReference type="GO" id="GO:0005524">
    <property type="term" value="F:ATP binding"/>
    <property type="evidence" value="ECO:0007669"/>
    <property type="project" value="UniProtKB-UniRule"/>
</dbReference>
<dbReference type="GO" id="GO:0004818">
    <property type="term" value="F:glutamate-tRNA ligase activity"/>
    <property type="evidence" value="ECO:0007669"/>
    <property type="project" value="UniProtKB-UniRule"/>
</dbReference>
<dbReference type="GO" id="GO:0000049">
    <property type="term" value="F:tRNA binding"/>
    <property type="evidence" value="ECO:0007669"/>
    <property type="project" value="InterPro"/>
</dbReference>
<dbReference type="GO" id="GO:0008270">
    <property type="term" value="F:zinc ion binding"/>
    <property type="evidence" value="ECO:0007669"/>
    <property type="project" value="InterPro"/>
</dbReference>
<dbReference type="GO" id="GO:0006424">
    <property type="term" value="P:glutamyl-tRNA aminoacylation"/>
    <property type="evidence" value="ECO:0007669"/>
    <property type="project" value="UniProtKB-UniRule"/>
</dbReference>
<dbReference type="CDD" id="cd00808">
    <property type="entry name" value="GluRS_core"/>
    <property type="match status" value="1"/>
</dbReference>
<dbReference type="FunFam" id="3.40.50.620:FF:000007">
    <property type="entry name" value="Glutamate--tRNA ligase"/>
    <property type="match status" value="1"/>
</dbReference>
<dbReference type="Gene3D" id="1.10.10.350">
    <property type="match status" value="1"/>
</dbReference>
<dbReference type="Gene3D" id="3.40.50.620">
    <property type="entry name" value="HUPs"/>
    <property type="match status" value="1"/>
</dbReference>
<dbReference type="HAMAP" id="MF_00022">
    <property type="entry name" value="Glu_tRNA_synth_type1"/>
    <property type="match status" value="1"/>
</dbReference>
<dbReference type="InterPro" id="IPR045462">
    <property type="entry name" value="aa-tRNA-synth_I_cd-bd"/>
</dbReference>
<dbReference type="InterPro" id="IPR020751">
    <property type="entry name" value="aa-tRNA-synth_I_codon-bd_sub2"/>
</dbReference>
<dbReference type="InterPro" id="IPR001412">
    <property type="entry name" value="aa-tRNA-synth_I_CS"/>
</dbReference>
<dbReference type="InterPro" id="IPR008925">
    <property type="entry name" value="aa_tRNA-synth_I_cd-bd_sf"/>
</dbReference>
<dbReference type="InterPro" id="IPR004527">
    <property type="entry name" value="Glu-tRNA-ligase_bac/mito"/>
</dbReference>
<dbReference type="InterPro" id="IPR000924">
    <property type="entry name" value="Glu/Gln-tRNA-synth"/>
</dbReference>
<dbReference type="InterPro" id="IPR020058">
    <property type="entry name" value="Glu/Gln-tRNA-synth_Ib_cat-dom"/>
</dbReference>
<dbReference type="InterPro" id="IPR049940">
    <property type="entry name" value="GluQ/Sye"/>
</dbReference>
<dbReference type="InterPro" id="IPR033910">
    <property type="entry name" value="GluRS_core"/>
</dbReference>
<dbReference type="InterPro" id="IPR014729">
    <property type="entry name" value="Rossmann-like_a/b/a_fold"/>
</dbReference>
<dbReference type="NCBIfam" id="TIGR00464">
    <property type="entry name" value="gltX_bact"/>
    <property type="match status" value="1"/>
</dbReference>
<dbReference type="PANTHER" id="PTHR43311">
    <property type="entry name" value="GLUTAMATE--TRNA LIGASE"/>
    <property type="match status" value="1"/>
</dbReference>
<dbReference type="PANTHER" id="PTHR43311:SF2">
    <property type="entry name" value="GLUTAMATE--TRNA LIGASE, MITOCHONDRIAL-RELATED"/>
    <property type="match status" value="1"/>
</dbReference>
<dbReference type="Pfam" id="PF19269">
    <property type="entry name" value="Anticodon_2"/>
    <property type="match status" value="1"/>
</dbReference>
<dbReference type="Pfam" id="PF00749">
    <property type="entry name" value="tRNA-synt_1c"/>
    <property type="match status" value="1"/>
</dbReference>
<dbReference type="PRINTS" id="PR00987">
    <property type="entry name" value="TRNASYNTHGLU"/>
</dbReference>
<dbReference type="SUPFAM" id="SSF48163">
    <property type="entry name" value="An anticodon-binding domain of class I aminoacyl-tRNA synthetases"/>
    <property type="match status" value="1"/>
</dbReference>
<dbReference type="SUPFAM" id="SSF52374">
    <property type="entry name" value="Nucleotidylyl transferase"/>
    <property type="match status" value="1"/>
</dbReference>
<dbReference type="PROSITE" id="PS00178">
    <property type="entry name" value="AA_TRNA_LIGASE_I"/>
    <property type="match status" value="1"/>
</dbReference>